<proteinExistence type="evidence at transcript level"/>
<accession>Q8AWH2</accession>
<reference evidence="7 8" key="1">
    <citation type="journal article" date="2003" name="Dev. Dyn.">
        <title>Molecular components of the endoderm specification pathway in Xenopus tropicalis.</title>
        <authorList>
            <person name="D'Souza A."/>
            <person name="Lee M."/>
            <person name="Taverner N."/>
            <person name="Mason J."/>
            <person name="Carruthers S."/>
            <person name="Smith J.C."/>
            <person name="Amaya E."/>
            <person name="Papalopulu N."/>
            <person name="Zorn A.M."/>
        </authorList>
    </citation>
    <scope>NUCLEOTIDE SEQUENCE [MRNA]</scope>
    <scope>TISSUE SPECIFICITY</scope>
    <source>
        <tissue evidence="8">Gastrula</tissue>
    </source>
</reference>
<reference evidence="9" key="2">
    <citation type="submission" date="2006-10" db="EMBL/GenBank/DDBJ databases">
        <authorList>
            <consortium name="Sanger Xenopus tropicalis EST/cDNA project"/>
        </authorList>
    </citation>
    <scope>NUCLEOTIDE SEQUENCE [LARGE SCALE MRNA]</scope>
    <source>
        <tissue evidence="9">Neurula</tissue>
    </source>
</reference>
<sequence length="376" mass="42787">MSSPDGGYASDDQFHGNCSVPIMMGQYEWTDPLTMFQDAKTKKEAGSANSRGKAEARIRRPMNAFMVWAKDERKRLAQQNPDLHNAELSKMLGKSWKSLTLASKRPFVEEAERLRVQHIQDYPDYKYRPRRKKQVKRMKREEEGFLPSADIPGPQVMGCNAMVGQNYKMQYSGQNSQQSQITPAGYFEDHNPVGYYYRGYNVPEYYMSQNSSVTCGPPAQGEYQALSYNFNSSYIPYQQNASAPAMGKQMAVKENIIQESPEHGIMGCQVSPQMYNGQMYVPECAKTHPVAQTEQHSSLHQSQQMVTQNYLPSQQDGHLESDIDKTEFDQYLMYEPKSDTELIYTIDQDSGAYSTNLLPSLISEANSVCYYDYCGV</sequence>
<name>S17B1_XENTR</name>
<organism>
    <name type="scientific">Xenopus tropicalis</name>
    <name type="common">Western clawed frog</name>
    <name type="synonym">Silurana tropicalis</name>
    <dbReference type="NCBI Taxonomy" id="8364"/>
    <lineage>
        <taxon>Eukaryota</taxon>
        <taxon>Metazoa</taxon>
        <taxon>Chordata</taxon>
        <taxon>Craniata</taxon>
        <taxon>Vertebrata</taxon>
        <taxon>Euteleostomi</taxon>
        <taxon>Amphibia</taxon>
        <taxon>Batrachia</taxon>
        <taxon>Anura</taxon>
        <taxon>Pipoidea</taxon>
        <taxon>Pipidae</taxon>
        <taxon>Xenopodinae</taxon>
        <taxon>Xenopus</taxon>
        <taxon>Silurana</taxon>
    </lineage>
</organism>
<dbReference type="EMBL" id="AY157636">
    <property type="protein sequence ID" value="AAN76330.1"/>
    <property type="molecule type" value="mRNA"/>
</dbReference>
<dbReference type="EMBL" id="CR848411">
    <property type="protein sequence ID" value="CAJ82411.1"/>
    <property type="molecule type" value="mRNA"/>
</dbReference>
<dbReference type="RefSeq" id="NP_988849.1">
    <property type="nucleotide sequence ID" value="NM_203518.1"/>
</dbReference>
<dbReference type="SMR" id="Q8AWH2"/>
<dbReference type="GeneID" id="394440"/>
<dbReference type="KEGG" id="xtr:394440"/>
<dbReference type="AGR" id="Xenbase:XB-GENE-484865"/>
<dbReference type="CTD" id="394440"/>
<dbReference type="Xenbase" id="XB-GENE-484865">
    <property type="gene designation" value="sox17b"/>
</dbReference>
<dbReference type="InParanoid" id="Q8AWH2"/>
<dbReference type="OMA" id="MEIIYTI"/>
<dbReference type="OrthoDB" id="9882966at2759"/>
<dbReference type="Reactome" id="R-XTR-3769402">
    <property type="pathway name" value="Deactivation of the beta-catenin transactivating complex"/>
</dbReference>
<dbReference type="Proteomes" id="UP000008143">
    <property type="component" value="Chromosome 6"/>
</dbReference>
<dbReference type="Bgee" id="ENSXETG00000026438">
    <property type="expression patterns" value="Expressed in gastrula and 22 other cell types or tissues"/>
</dbReference>
<dbReference type="GO" id="GO:0005634">
    <property type="term" value="C:nucleus"/>
    <property type="evidence" value="ECO:0007669"/>
    <property type="project" value="UniProtKB-SubCell"/>
</dbReference>
<dbReference type="GO" id="GO:0003677">
    <property type="term" value="F:DNA binding"/>
    <property type="evidence" value="ECO:0007669"/>
    <property type="project" value="UniProtKB-KW"/>
</dbReference>
<dbReference type="GO" id="GO:0003700">
    <property type="term" value="F:DNA-binding transcription factor activity"/>
    <property type="evidence" value="ECO:0000315"/>
    <property type="project" value="Xenbase"/>
</dbReference>
<dbReference type="GO" id="GO:0048565">
    <property type="term" value="P:digestive tract development"/>
    <property type="evidence" value="ECO:0000303"/>
    <property type="project" value="Xenbase"/>
</dbReference>
<dbReference type="GO" id="GO:0007398">
    <property type="term" value="P:ectoderm development"/>
    <property type="evidence" value="ECO:0000315"/>
    <property type="project" value="Xenbase"/>
</dbReference>
<dbReference type="GO" id="GO:0007369">
    <property type="term" value="P:gastrulation"/>
    <property type="evidence" value="ECO:0007669"/>
    <property type="project" value="UniProtKB-KW"/>
</dbReference>
<dbReference type="GO" id="GO:0048382">
    <property type="term" value="P:mesendoderm development"/>
    <property type="evidence" value="ECO:0000315"/>
    <property type="project" value="Xenbase"/>
</dbReference>
<dbReference type="GO" id="GO:0009299">
    <property type="term" value="P:mRNA transcription"/>
    <property type="evidence" value="ECO:0000315"/>
    <property type="project" value="Xenbase"/>
</dbReference>
<dbReference type="GO" id="GO:0016055">
    <property type="term" value="P:Wnt signaling pathway"/>
    <property type="evidence" value="ECO:0007669"/>
    <property type="project" value="UniProtKB-KW"/>
</dbReference>
<dbReference type="CDD" id="cd22047">
    <property type="entry name" value="HMG-box_SoxF_SOX17"/>
    <property type="match status" value="1"/>
</dbReference>
<dbReference type="FunFam" id="1.10.30.10:FF:000008">
    <property type="entry name" value="transcription factor SOX-7"/>
    <property type="match status" value="1"/>
</dbReference>
<dbReference type="Gene3D" id="1.10.30.10">
    <property type="entry name" value="High mobility group box domain"/>
    <property type="match status" value="1"/>
</dbReference>
<dbReference type="InterPro" id="IPR009071">
    <property type="entry name" value="HMG_box_dom"/>
</dbReference>
<dbReference type="InterPro" id="IPR036910">
    <property type="entry name" value="HMG_box_dom_sf"/>
</dbReference>
<dbReference type="InterPro" id="IPR021934">
    <property type="entry name" value="Sox_C"/>
</dbReference>
<dbReference type="InterPro" id="IPR050140">
    <property type="entry name" value="SRY-related_HMG-box_TF-like"/>
</dbReference>
<dbReference type="PANTHER" id="PTHR10270">
    <property type="entry name" value="SOX TRANSCRIPTION FACTOR"/>
    <property type="match status" value="1"/>
</dbReference>
<dbReference type="PANTHER" id="PTHR10270:SF326">
    <property type="entry name" value="TRANSCRIPTION FACTOR SOX-17-BETA.3"/>
    <property type="match status" value="1"/>
</dbReference>
<dbReference type="Pfam" id="PF00505">
    <property type="entry name" value="HMG_box"/>
    <property type="match status" value="1"/>
</dbReference>
<dbReference type="SMART" id="SM00398">
    <property type="entry name" value="HMG"/>
    <property type="match status" value="1"/>
</dbReference>
<dbReference type="SUPFAM" id="SSF47095">
    <property type="entry name" value="HMG-box"/>
    <property type="match status" value="1"/>
</dbReference>
<dbReference type="PROSITE" id="PS50118">
    <property type="entry name" value="HMG_BOX_2"/>
    <property type="match status" value="1"/>
</dbReference>
<dbReference type="PROSITE" id="PS51516">
    <property type="entry name" value="SOX_C"/>
    <property type="match status" value="1"/>
</dbReference>
<gene>
    <name type="primary">sox17b.1</name>
    <name type="ORF">TNeu127g05.1</name>
</gene>
<protein>
    <recommendedName>
        <fullName evidence="1">Transcription factor Sox-17-beta.1</fullName>
    </recommendedName>
    <alternativeName>
        <fullName>SRY (sex determining region Y)-box 17-beta.1</fullName>
        <shortName evidence="6">tSox17beta</shortName>
    </alternativeName>
</protein>
<comment type="function">
    <text evidence="1">Transcription activator. Doesn't appear to bind to the consensus 5'-AACAAT-3' DNA binding site, but binds 5'-ATTGTT-3'. All of the sox17 proteins are required for embryonic endoderm development and gastrulation movements, and show some redundancy in function. In addition, the sox17 proteins have distinct but overlapping roles in later gut development. Acts downstream of vegt-signaling in endoderm differentiation to induce a range of endodermal genes both directly (including endodermin and dhh/chh) and indirectly. Also represses wnt-responsive genes to inhibit wnt/beta-catenin-mediated signaling (By similarity).</text>
</comment>
<comment type="subunit">
    <text evidence="1">Interacts (via C-terminus) with ctnnb1/beta-catenin (via Armadillo repeats); this interaction is required for inhibition of wnt-signaling.</text>
</comment>
<comment type="subcellular location">
    <subcellularLocation>
        <location evidence="1 3">Nucleus</location>
    </subcellularLocation>
</comment>
<comment type="tissue specificity">
    <text evidence="5">Expressed throughout all the deep and superficial endoderm during gastrulation. Expression then declines rapidly after gastrulation, however a small patch of endoderm cells behind the cement gland maintains expression even into tailbud stages.</text>
</comment>
<comment type="domain">
    <text evidence="2">The 9aaTAD motif is a transactivation domain present in a large number of yeast and animal transcription factors.</text>
</comment>
<keyword id="KW-0010">Activator</keyword>
<keyword id="KW-0217">Developmental protein</keyword>
<keyword id="KW-0238">DNA-binding</keyword>
<keyword id="KW-0306">Gastrulation</keyword>
<keyword id="KW-0539">Nucleus</keyword>
<keyword id="KW-1185">Reference proteome</keyword>
<keyword id="KW-0804">Transcription</keyword>
<keyword id="KW-0805">Transcription regulation</keyword>
<keyword id="KW-0879">Wnt signaling pathway</keyword>
<evidence type="ECO:0000250" key="1">
    <source>
        <dbReference type="UniProtKB" id="O42601"/>
    </source>
</evidence>
<evidence type="ECO:0000250" key="2">
    <source>
        <dbReference type="UniProtKB" id="Q9H6I2"/>
    </source>
</evidence>
<evidence type="ECO:0000255" key="3">
    <source>
        <dbReference type="PROSITE-ProRule" id="PRU00267"/>
    </source>
</evidence>
<evidence type="ECO:0000255" key="4">
    <source>
        <dbReference type="PROSITE-ProRule" id="PRU00849"/>
    </source>
</evidence>
<evidence type="ECO:0000269" key="5">
    <source>
    </source>
</evidence>
<evidence type="ECO:0000303" key="6">
    <source>
    </source>
</evidence>
<evidence type="ECO:0000305" key="7"/>
<evidence type="ECO:0000312" key="8">
    <source>
        <dbReference type="EMBL" id="AAN76330.1"/>
    </source>
</evidence>
<evidence type="ECO:0000312" key="9">
    <source>
        <dbReference type="EMBL" id="CAJ82411.1"/>
    </source>
</evidence>
<feature type="chain" id="PRO_0000382473" description="Transcription factor Sox-17-beta.1">
    <location>
        <begin position="1"/>
        <end position="376"/>
    </location>
</feature>
<feature type="domain" description="Sox C-terminal" evidence="4">
    <location>
        <begin position="259"/>
        <end position="376"/>
    </location>
</feature>
<feature type="DNA-binding region" description="HMG box" evidence="3">
    <location>
        <begin position="58"/>
        <end position="126"/>
    </location>
</feature>
<feature type="region of interest" description="Required for transcriptional activity and interaction with ctnnb1" evidence="1">
    <location>
        <begin position="327"/>
        <end position="331"/>
    </location>
</feature>
<feature type="short sequence motif" description="9aaTAD" evidence="2">
    <location>
        <begin position="326"/>
        <end position="334"/>
    </location>
</feature>